<protein>
    <recommendedName>
        <fullName evidence="1">Large ribosomal subunit protein uL3</fullName>
    </recommendedName>
    <alternativeName>
        <fullName evidence="2">50S ribosomal protein L3</fullName>
    </alternativeName>
</protein>
<feature type="chain" id="PRO_1000214510" description="Large ribosomal subunit protein uL3">
    <location>
        <begin position="1"/>
        <end position="211"/>
    </location>
</feature>
<gene>
    <name evidence="1" type="primary">rplC</name>
    <name type="ordered locus">GM21_3328</name>
</gene>
<organism>
    <name type="scientific">Geobacter sp. (strain M21)</name>
    <dbReference type="NCBI Taxonomy" id="443144"/>
    <lineage>
        <taxon>Bacteria</taxon>
        <taxon>Pseudomonadati</taxon>
        <taxon>Thermodesulfobacteriota</taxon>
        <taxon>Desulfuromonadia</taxon>
        <taxon>Geobacterales</taxon>
        <taxon>Geobacteraceae</taxon>
        <taxon>Geobacter</taxon>
    </lineage>
</organism>
<reference key="1">
    <citation type="submission" date="2009-07" db="EMBL/GenBank/DDBJ databases">
        <title>Complete sequence of Geobacter sp. M21.</title>
        <authorList>
            <consortium name="US DOE Joint Genome Institute"/>
            <person name="Lucas S."/>
            <person name="Copeland A."/>
            <person name="Lapidus A."/>
            <person name="Glavina del Rio T."/>
            <person name="Dalin E."/>
            <person name="Tice H."/>
            <person name="Bruce D."/>
            <person name="Goodwin L."/>
            <person name="Pitluck S."/>
            <person name="Saunders E."/>
            <person name="Brettin T."/>
            <person name="Detter J.C."/>
            <person name="Han C."/>
            <person name="Larimer F."/>
            <person name="Land M."/>
            <person name="Hauser L."/>
            <person name="Kyrpides N."/>
            <person name="Ovchinnikova G."/>
            <person name="Lovley D."/>
        </authorList>
    </citation>
    <scope>NUCLEOTIDE SEQUENCE [LARGE SCALE GENOMIC DNA]</scope>
    <source>
        <strain>M21</strain>
    </source>
</reference>
<name>RL3_GEOSM</name>
<dbReference type="EMBL" id="CP001661">
    <property type="protein sequence ID" value="ACT19353.1"/>
    <property type="molecule type" value="Genomic_DNA"/>
</dbReference>
<dbReference type="SMR" id="C6E4Q7"/>
<dbReference type="STRING" id="443144.GM21_3328"/>
<dbReference type="KEGG" id="gem:GM21_3328"/>
<dbReference type="eggNOG" id="COG0087">
    <property type="taxonomic scope" value="Bacteria"/>
</dbReference>
<dbReference type="HOGENOM" id="CLU_044142_4_1_7"/>
<dbReference type="OrthoDB" id="9806135at2"/>
<dbReference type="GO" id="GO:0022625">
    <property type="term" value="C:cytosolic large ribosomal subunit"/>
    <property type="evidence" value="ECO:0007669"/>
    <property type="project" value="TreeGrafter"/>
</dbReference>
<dbReference type="GO" id="GO:0019843">
    <property type="term" value="F:rRNA binding"/>
    <property type="evidence" value="ECO:0007669"/>
    <property type="project" value="UniProtKB-UniRule"/>
</dbReference>
<dbReference type="GO" id="GO:0003735">
    <property type="term" value="F:structural constituent of ribosome"/>
    <property type="evidence" value="ECO:0007669"/>
    <property type="project" value="InterPro"/>
</dbReference>
<dbReference type="GO" id="GO:0006412">
    <property type="term" value="P:translation"/>
    <property type="evidence" value="ECO:0007669"/>
    <property type="project" value="UniProtKB-UniRule"/>
</dbReference>
<dbReference type="FunFam" id="2.40.30.10:FF:000004">
    <property type="entry name" value="50S ribosomal protein L3"/>
    <property type="match status" value="1"/>
</dbReference>
<dbReference type="Gene3D" id="3.30.160.810">
    <property type="match status" value="1"/>
</dbReference>
<dbReference type="Gene3D" id="2.40.30.10">
    <property type="entry name" value="Translation factors"/>
    <property type="match status" value="1"/>
</dbReference>
<dbReference type="HAMAP" id="MF_01325_B">
    <property type="entry name" value="Ribosomal_uL3_B"/>
    <property type="match status" value="1"/>
</dbReference>
<dbReference type="InterPro" id="IPR000597">
    <property type="entry name" value="Ribosomal_uL3"/>
</dbReference>
<dbReference type="InterPro" id="IPR019927">
    <property type="entry name" value="Ribosomal_uL3_bac/org-type"/>
</dbReference>
<dbReference type="InterPro" id="IPR019926">
    <property type="entry name" value="Ribosomal_uL3_CS"/>
</dbReference>
<dbReference type="InterPro" id="IPR009000">
    <property type="entry name" value="Transl_B-barrel_sf"/>
</dbReference>
<dbReference type="NCBIfam" id="TIGR03625">
    <property type="entry name" value="L3_bact"/>
    <property type="match status" value="1"/>
</dbReference>
<dbReference type="PANTHER" id="PTHR11229">
    <property type="entry name" value="50S RIBOSOMAL PROTEIN L3"/>
    <property type="match status" value="1"/>
</dbReference>
<dbReference type="PANTHER" id="PTHR11229:SF16">
    <property type="entry name" value="LARGE RIBOSOMAL SUBUNIT PROTEIN UL3C"/>
    <property type="match status" value="1"/>
</dbReference>
<dbReference type="Pfam" id="PF00297">
    <property type="entry name" value="Ribosomal_L3"/>
    <property type="match status" value="1"/>
</dbReference>
<dbReference type="SUPFAM" id="SSF50447">
    <property type="entry name" value="Translation proteins"/>
    <property type="match status" value="1"/>
</dbReference>
<dbReference type="PROSITE" id="PS00474">
    <property type="entry name" value="RIBOSOMAL_L3"/>
    <property type="match status" value="1"/>
</dbReference>
<proteinExistence type="inferred from homology"/>
<comment type="function">
    <text evidence="1">One of the primary rRNA binding proteins, it binds directly near the 3'-end of the 23S rRNA, where it nucleates assembly of the 50S subunit.</text>
</comment>
<comment type="subunit">
    <text evidence="1">Part of the 50S ribosomal subunit. Forms a cluster with proteins L14 and L19.</text>
</comment>
<comment type="similarity">
    <text evidence="1">Belongs to the universal ribosomal protein uL3 family.</text>
</comment>
<sequence>MNKGLIGKKLGMTQIFAEDGRRIAVTVVEAGPCVVVQKKSVAKDGYSAIQVGLGAKDASRANAAQIGHCKGAGAGVFTHYRELRMDNTDAYNLGDVIEAAVFEEGDLVDVTGTSIGKGFAGVIKRWGFKGGRSSHGSRFHRAPGSIGCSATPSRVFKNKKMPGQLGNEKVTVQRLKVVRVDAADNLILLGGAIPGSANGVVLIKDSVKAKK</sequence>
<accession>C6E4Q7</accession>
<keyword id="KW-0687">Ribonucleoprotein</keyword>
<keyword id="KW-0689">Ribosomal protein</keyword>
<keyword id="KW-0694">RNA-binding</keyword>
<keyword id="KW-0699">rRNA-binding</keyword>
<evidence type="ECO:0000255" key="1">
    <source>
        <dbReference type="HAMAP-Rule" id="MF_01325"/>
    </source>
</evidence>
<evidence type="ECO:0000305" key="2"/>